<keyword id="KW-0687">Ribonucleoprotein</keyword>
<keyword id="KW-0689">Ribosomal protein</keyword>
<protein>
    <recommendedName>
        <fullName evidence="1">Large ribosomal subunit protein bL28</fullName>
    </recommendedName>
    <alternativeName>
        <fullName evidence="2">50S ribosomal protein L28</fullName>
    </alternativeName>
</protein>
<gene>
    <name evidence="1" type="primary">rpmB</name>
    <name type="ordered locus">GFO_2244</name>
</gene>
<evidence type="ECO:0000255" key="1">
    <source>
        <dbReference type="HAMAP-Rule" id="MF_00373"/>
    </source>
</evidence>
<evidence type="ECO:0000305" key="2"/>
<sequence length="79" mass="8953">MSRVCELTGKRAMVGNNVSHAMNKTKRKFNANLVKKRFFLPEEDRWVTLKVCTSALKDINKKGISAVIKEAKAKGFLQK</sequence>
<feature type="chain" id="PRO_1000007245" description="Large ribosomal subunit protein bL28">
    <location>
        <begin position="1"/>
        <end position="79"/>
    </location>
</feature>
<dbReference type="EMBL" id="CU207366">
    <property type="protein sequence ID" value="CAL67209.1"/>
    <property type="molecule type" value="Genomic_DNA"/>
</dbReference>
<dbReference type="RefSeq" id="WP_011710112.1">
    <property type="nucleotide sequence ID" value="NC_008571.1"/>
</dbReference>
<dbReference type="SMR" id="A0M3L4"/>
<dbReference type="STRING" id="411154.GFO_2244"/>
<dbReference type="KEGG" id="gfo:GFO_2244"/>
<dbReference type="eggNOG" id="COG0227">
    <property type="taxonomic scope" value="Bacteria"/>
</dbReference>
<dbReference type="HOGENOM" id="CLU_064548_3_1_10"/>
<dbReference type="OrthoDB" id="9805609at2"/>
<dbReference type="Proteomes" id="UP000000755">
    <property type="component" value="Chromosome"/>
</dbReference>
<dbReference type="GO" id="GO:1990904">
    <property type="term" value="C:ribonucleoprotein complex"/>
    <property type="evidence" value="ECO:0007669"/>
    <property type="project" value="UniProtKB-KW"/>
</dbReference>
<dbReference type="GO" id="GO:0005840">
    <property type="term" value="C:ribosome"/>
    <property type="evidence" value="ECO:0007669"/>
    <property type="project" value="UniProtKB-KW"/>
</dbReference>
<dbReference type="GO" id="GO:0003735">
    <property type="term" value="F:structural constituent of ribosome"/>
    <property type="evidence" value="ECO:0007669"/>
    <property type="project" value="InterPro"/>
</dbReference>
<dbReference type="GO" id="GO:0006412">
    <property type="term" value="P:translation"/>
    <property type="evidence" value="ECO:0007669"/>
    <property type="project" value="UniProtKB-UniRule"/>
</dbReference>
<dbReference type="FunFam" id="2.30.170.40:FF:000001">
    <property type="entry name" value="50S ribosomal protein L28"/>
    <property type="match status" value="1"/>
</dbReference>
<dbReference type="Gene3D" id="2.30.170.40">
    <property type="entry name" value="Ribosomal protein L28/L24"/>
    <property type="match status" value="1"/>
</dbReference>
<dbReference type="HAMAP" id="MF_00373">
    <property type="entry name" value="Ribosomal_bL28"/>
    <property type="match status" value="1"/>
</dbReference>
<dbReference type="InterPro" id="IPR050096">
    <property type="entry name" value="Bacterial_rp_bL28"/>
</dbReference>
<dbReference type="InterPro" id="IPR026569">
    <property type="entry name" value="Ribosomal_bL28"/>
</dbReference>
<dbReference type="InterPro" id="IPR034704">
    <property type="entry name" value="Ribosomal_bL28/bL31-like_sf"/>
</dbReference>
<dbReference type="InterPro" id="IPR001383">
    <property type="entry name" value="Ribosomal_bL28_bact-type"/>
</dbReference>
<dbReference type="InterPro" id="IPR037147">
    <property type="entry name" value="Ribosomal_bL28_sf"/>
</dbReference>
<dbReference type="NCBIfam" id="TIGR00009">
    <property type="entry name" value="L28"/>
    <property type="match status" value="1"/>
</dbReference>
<dbReference type="PANTHER" id="PTHR39080">
    <property type="entry name" value="50S RIBOSOMAL PROTEIN L28"/>
    <property type="match status" value="1"/>
</dbReference>
<dbReference type="PANTHER" id="PTHR39080:SF1">
    <property type="entry name" value="LARGE RIBOSOMAL SUBUNIT PROTEIN BL28A"/>
    <property type="match status" value="1"/>
</dbReference>
<dbReference type="Pfam" id="PF00830">
    <property type="entry name" value="Ribosomal_L28"/>
    <property type="match status" value="1"/>
</dbReference>
<dbReference type="SUPFAM" id="SSF143800">
    <property type="entry name" value="L28p-like"/>
    <property type="match status" value="1"/>
</dbReference>
<accession>A0M3L4</accession>
<comment type="similarity">
    <text evidence="1">Belongs to the bacterial ribosomal protein bL28 family.</text>
</comment>
<name>RL28_CHRFK</name>
<proteinExistence type="inferred from homology"/>
<reference key="1">
    <citation type="journal article" date="2006" name="Environ. Microbiol.">
        <title>Whole genome analysis of the marine Bacteroidetes'Gramella forsetii' reveals adaptations to degradation of polymeric organic matter.</title>
        <authorList>
            <person name="Bauer M."/>
            <person name="Kube M."/>
            <person name="Teeling H."/>
            <person name="Richter M."/>
            <person name="Lombardot T."/>
            <person name="Allers E."/>
            <person name="Wuerdemann C.A."/>
            <person name="Quast C."/>
            <person name="Kuhl H."/>
            <person name="Knaust F."/>
            <person name="Woebken D."/>
            <person name="Bischof K."/>
            <person name="Mussmann M."/>
            <person name="Choudhuri J.V."/>
            <person name="Meyer F."/>
            <person name="Reinhardt R."/>
            <person name="Amann R.I."/>
            <person name="Gloeckner F.O."/>
        </authorList>
    </citation>
    <scope>NUCLEOTIDE SEQUENCE [LARGE SCALE GENOMIC DNA]</scope>
    <source>
        <strain>DSM 17595 / CGMCC 1.15422 / KT0803</strain>
    </source>
</reference>
<organism>
    <name type="scientific">Christiangramia forsetii (strain DSM 17595 / CGMCC 1.15422 / KT0803)</name>
    <name type="common">Gramella forsetii</name>
    <dbReference type="NCBI Taxonomy" id="411154"/>
    <lineage>
        <taxon>Bacteria</taxon>
        <taxon>Pseudomonadati</taxon>
        <taxon>Bacteroidota</taxon>
        <taxon>Flavobacteriia</taxon>
        <taxon>Flavobacteriales</taxon>
        <taxon>Flavobacteriaceae</taxon>
        <taxon>Christiangramia</taxon>
    </lineage>
</organism>